<proteinExistence type="evidence at protein level"/>
<organism>
    <name type="scientific">Talaromyces verruculosus</name>
    <name type="common">Penicillium verruculosum</name>
    <dbReference type="NCBI Taxonomy" id="198730"/>
    <lineage>
        <taxon>Eukaryota</taxon>
        <taxon>Fungi</taxon>
        <taxon>Dikarya</taxon>
        <taxon>Ascomycota</taxon>
        <taxon>Pezizomycotina</taxon>
        <taxon>Eurotiomycetes</taxon>
        <taxon>Eurotiomycetidae</taxon>
        <taxon>Eurotiales</taxon>
        <taxon>Trichocomaceae</taxon>
        <taxon>Talaromyces</taxon>
        <taxon>Talaromyces sect. Talaromyces</taxon>
    </lineage>
</organism>
<comment type="function">
    <text evidence="5 8">Acetyltransferase; part of the gene cluster that mediates the biosynthesis of chrodrimanin B, a meroterpenoid that acts as a potent blocker of insect GABA-gated chloride channels (PubMed:30417647). The first step of the pathway is the biosynthesis of 6-hydroxymellein by the polyketide synthase cdmE (PubMed:30417647). The prenyltransferase cdmH acts as a 6-hydroxymellein 5-farnesyltransferase and produces the hydrophobic metabolite verruculide C (PubMed:30417647). The FAD-dependent monooxygenase cdmI further converts verruculide C into verruculide B (PubMed:30417647). The terpene cyclase cdmG then produced the pentacyclic molecule 3-hydroxypentacecilide A, the backbone structure of chrodrimanin B, via folding the farnesyl moiety of the substrate into the chair-boat conformation (PubMed:30417647). The short-chain dehydrogenase/reductase cdmF functions as the 3-OH dehydrogenase that oxidizes the C-3 hydroxyl group of 3-hydroxypentacecilide A and produces chrodrimanin C, the dehydrogenated product of 3-hydroxypentacecilide A (PubMed:30417647). The cytochrome P450 monooxygenase cdmJ then accepts both 3-hydroxypentacecilide A and chrodrimanin C and functions as a C-7-beta-hydroxylase to produce respectively chrodrimanin H and chrodrimanin F (PubMed:30417647). The dioxygenase cdmA accepts chrodrimanin H to afford chrodrimanin E, which is further transformed to chrodrimanin A by the dioxygenase cdmD (PubMed:30417647). CdmA can also accept chrodrimanin C as substrate to convert it into verruculide A, which is further converted into chrodrimanin T by cdmD (PubMed:30417647). The last step of the biosynthesis is proposed to be performed by the acetyltransferase cdmC which acetylates chrodrimanin A to yield chrodrimanin B (Probable). The pathway may also lead to the production of additional shunt products, including chrodrimanins T and U (PubMed:30417647).</text>
</comment>
<comment type="catalytic activity">
    <reaction evidence="5">
        <text>chrodrimanin A + acetyl-CoA = chrodrimanin B + CoA</text>
        <dbReference type="Rhea" id="RHEA:65324"/>
        <dbReference type="ChEBI" id="CHEBI:57287"/>
        <dbReference type="ChEBI" id="CHEBI:57288"/>
        <dbReference type="ChEBI" id="CHEBI:156418"/>
        <dbReference type="ChEBI" id="CHEBI:156420"/>
    </reaction>
    <physiologicalReaction direction="left-to-right" evidence="5">
        <dbReference type="Rhea" id="RHEA:65325"/>
    </physiologicalReaction>
</comment>
<comment type="pathway">
    <text evidence="8">Secondary metabolite biosynthesis; terpenoid biosynthesis.</text>
</comment>
<comment type="subcellular location">
    <subcellularLocation>
        <location evidence="1">Membrane</location>
        <topology evidence="1">Multi-pass membrane protein</topology>
    </subcellularLocation>
</comment>
<comment type="biotechnology">
    <text evidence="3 4">Compounds in the chrodrimanin family such as chrodrimanin A or verruculide A exhibit strong inhibitory activities against protein tyrosine phosphatase 1B (PTP1B) and therefore, they could potentially be developed into drugs for the treatment of type 2 diabetes or obesity (PubMed:26115570). Furthermore, chrodrimanin B, the end product of the pathway involving chrodrimanin A or verruculide A, does not exhibit the PTP1B inhibitory activity, while it functions as a potent blocker of insect GABA-gated chloride channels (PubMed:25902139).</text>
</comment>
<comment type="similarity">
    <text evidence="7">Belongs to the wax synthase family.</text>
</comment>
<name>CDMC_TALVE</name>
<dbReference type="EC" id="2.3.1.-" evidence="8"/>
<dbReference type="EMBL" id="LC422696">
    <property type="protein sequence ID" value="BBG28482.1"/>
    <property type="molecule type" value="Genomic_DNA"/>
</dbReference>
<dbReference type="GlyCosmos" id="A0A3G9GUR6">
    <property type="glycosylation" value="1 site, No reported glycans"/>
</dbReference>
<dbReference type="UniPathway" id="UPA00213"/>
<dbReference type="GO" id="GO:0016020">
    <property type="term" value="C:membrane"/>
    <property type="evidence" value="ECO:0007669"/>
    <property type="project" value="UniProtKB-SubCell"/>
</dbReference>
<dbReference type="GO" id="GO:0016746">
    <property type="term" value="F:acyltransferase activity"/>
    <property type="evidence" value="ECO:0007669"/>
    <property type="project" value="UniProtKB-KW"/>
</dbReference>
<dbReference type="GO" id="GO:0016114">
    <property type="term" value="P:terpenoid biosynthetic process"/>
    <property type="evidence" value="ECO:0007669"/>
    <property type="project" value="UniProtKB-UniPathway"/>
</dbReference>
<dbReference type="InterPro" id="IPR032805">
    <property type="entry name" value="Wax_synthase_dom"/>
</dbReference>
<dbReference type="Pfam" id="PF13813">
    <property type="entry name" value="MBOAT_2"/>
    <property type="match status" value="1"/>
</dbReference>
<gene>
    <name evidence="6" type="primary">cdmC</name>
</gene>
<protein>
    <recommendedName>
        <fullName evidence="6">Acetyltransferase cdmC</fullName>
        <ecNumber evidence="8">2.3.1.-</ecNumber>
    </recommendedName>
    <alternativeName>
        <fullName evidence="6">chrodrimanin B biosynthesis cluster protein C</fullName>
    </alternativeName>
</protein>
<feature type="chain" id="PRO_0000449129" description="Acetyltransferase cdmC">
    <location>
        <begin position="1"/>
        <end position="417"/>
    </location>
</feature>
<feature type="transmembrane region" description="Helical" evidence="1">
    <location>
        <begin position="308"/>
        <end position="328"/>
    </location>
</feature>
<feature type="transmembrane region" description="Helical" evidence="1">
    <location>
        <begin position="357"/>
        <end position="377"/>
    </location>
</feature>
<feature type="transmembrane region" description="Helical" evidence="1">
    <location>
        <begin position="389"/>
        <end position="409"/>
    </location>
</feature>
<feature type="glycosylation site" description="N-linked (GlcNAc...) asparagine" evidence="2">
    <location>
        <position position="64"/>
    </location>
</feature>
<keyword id="KW-0012">Acyltransferase</keyword>
<keyword id="KW-0325">Glycoprotein</keyword>
<keyword id="KW-0472">Membrane</keyword>
<keyword id="KW-0808">Transferase</keyword>
<keyword id="KW-0812">Transmembrane</keyword>
<keyword id="KW-1133">Transmembrane helix</keyword>
<evidence type="ECO:0000255" key="1"/>
<evidence type="ECO:0000255" key="2">
    <source>
        <dbReference type="PROSITE-ProRule" id="PRU00498"/>
    </source>
</evidence>
<evidence type="ECO:0000269" key="3">
    <source>
    </source>
</evidence>
<evidence type="ECO:0000269" key="4">
    <source>
    </source>
</evidence>
<evidence type="ECO:0000269" key="5">
    <source>
    </source>
</evidence>
<evidence type="ECO:0000303" key="6">
    <source>
    </source>
</evidence>
<evidence type="ECO:0000305" key="7"/>
<evidence type="ECO:0000305" key="8">
    <source>
    </source>
</evidence>
<accession>A0A3G9GUR6</accession>
<reference key="1">
    <citation type="journal article" date="2018" name="Org. Lett.">
        <title>Elucidation and heterologous reconstitution of chrodrimanin B biosynthesis.</title>
        <authorList>
            <person name="Bai T."/>
            <person name="Quan Z."/>
            <person name="Zhai R."/>
            <person name="Awakawa T."/>
            <person name="Matsuda Y."/>
            <person name="Abe I."/>
        </authorList>
    </citation>
    <scope>NUCLEOTIDE SEQUENCE [GENOMIC DNA]</scope>
    <scope>FUNCTION</scope>
    <scope>CATALYTIC ACTIVITY</scope>
    <scope>PATHWAY</scope>
    <source>
        <strain>TPU1311</strain>
    </source>
</reference>
<reference key="2">
    <citation type="journal article" date="2015" name="Bioorg. Med. Chem. Lett.">
        <title>Verruculides A and B, two new protein tyrosine phosphatase 1B inhibitors from an Indonesian ascidian-derived Penicillium verruculosum.</title>
        <authorList>
            <person name="Yamazaki H."/>
            <person name="Nakayama W."/>
            <person name="Takahashi O."/>
            <person name="Kirikoshi R."/>
            <person name="Izumikawa Y."/>
            <person name="Iwasaki K."/>
            <person name="Toraiwa K."/>
            <person name="Ukai K."/>
            <person name="Rotinsulu H."/>
            <person name="Wewengkang D.S."/>
            <person name="Sumilat D.A."/>
            <person name="Mangindaan R.E."/>
            <person name="Namikoshi M."/>
        </authorList>
    </citation>
    <scope>BIOTECHNOLOGY</scope>
</reference>
<reference key="3">
    <citation type="journal article" date="2015" name="PLoS ONE">
        <title>Meroterpenoid Chrodrimanins Are Selective and Potent Blockers of Insect GABA-Gated Chloride Channels.</title>
        <authorList>
            <person name="Xu Y."/>
            <person name="Furutani S."/>
            <person name="Ihara M."/>
            <person name="Ling Y."/>
            <person name="Yang X."/>
            <person name="Kai K."/>
            <person name="Hayashi H."/>
            <person name="Matsuda K."/>
        </authorList>
    </citation>
    <scope>BIOTECHNOLOGY</scope>
</reference>
<sequence>MLSLEPLSRPVLDSSQTLLVIFLLAFTRQNSIFRYLSIPVLTFIVKEQITQPPAVVENFHQWLNESSVPFNYLHHINILALTSIDLRNDNNGVLPGLFDRIKSAFIYQLNPRGVGTRYQVKNIPPVPEYYKKRKGYLSQRYRFVVRQLCLFVWQYLIVDVGCSLWHNLPDQERFALFGPGTEWNIINAGPQQWKVRLMAAMIFWTTARNAVDLSHRLGSAVLTGIGATSVHEWPPMCGSLRDAYTLRNLWGKWWHQQLRWTLSSHSNFVTRRLLKLPRRSLLERYLNNAIVHVFSAFIHVNGWRLAGIPDGYIGPSLFYMSFVGGYLVEDFVQHIWATLFRSRSRTSTGIFFERLTGIFWVATFLTVTTPWWIYPLLRREHSFALPVSLVESVGMNNALAMIGVGAFILKTRFDANI</sequence>